<organism>
    <name type="scientific">Vanderwaltozyma polyspora (strain ATCC 22028 / DSM 70294 / BCRC 21397 / CBS 2163 / NBRC 10782 / NRRL Y-8283 / UCD 57-17)</name>
    <name type="common">Kluyveromyces polysporus</name>
    <dbReference type="NCBI Taxonomy" id="436907"/>
    <lineage>
        <taxon>Eukaryota</taxon>
        <taxon>Fungi</taxon>
        <taxon>Dikarya</taxon>
        <taxon>Ascomycota</taxon>
        <taxon>Saccharomycotina</taxon>
        <taxon>Saccharomycetes</taxon>
        <taxon>Saccharomycetales</taxon>
        <taxon>Saccharomycetaceae</taxon>
        <taxon>Vanderwaltozyma</taxon>
    </lineage>
</organism>
<keyword id="KW-0067">ATP-binding</keyword>
<keyword id="KW-0347">Helicase</keyword>
<keyword id="KW-0378">Hydrolase</keyword>
<keyword id="KW-0547">Nucleotide-binding</keyword>
<keyword id="KW-0539">Nucleus</keyword>
<keyword id="KW-1185">Reference proteome</keyword>
<keyword id="KW-0690">Ribosome biogenesis</keyword>
<keyword id="KW-0694">RNA-binding</keyword>
<keyword id="KW-0698">rRNA processing</keyword>
<evidence type="ECO:0000250" key="1"/>
<evidence type="ECO:0000255" key="2">
    <source>
        <dbReference type="PROSITE-ProRule" id="PRU00541"/>
    </source>
</evidence>
<evidence type="ECO:0000255" key="3">
    <source>
        <dbReference type="PROSITE-ProRule" id="PRU00542"/>
    </source>
</evidence>
<evidence type="ECO:0000256" key="4">
    <source>
        <dbReference type="SAM" id="MobiDB-lite"/>
    </source>
</evidence>
<evidence type="ECO:0000305" key="5"/>
<reference key="1">
    <citation type="journal article" date="2007" name="Proc. Natl. Acad. Sci. U.S.A.">
        <title>Independent sorting-out of thousands of duplicated gene pairs in two yeast species descended from a whole-genome duplication.</title>
        <authorList>
            <person name="Scannell D.R."/>
            <person name="Frank A.C."/>
            <person name="Conant G.C."/>
            <person name="Byrne K.P."/>
            <person name="Woolfit M."/>
            <person name="Wolfe K.H."/>
        </authorList>
    </citation>
    <scope>NUCLEOTIDE SEQUENCE [LARGE SCALE GENOMIC DNA]</scope>
    <source>
        <strain>ATCC 22028 / DSM 70294 / BCRC 21397 / CBS 2163 / NBRC 10782 / NRRL Y-8283 / UCD 57-17</strain>
    </source>
</reference>
<gene>
    <name type="primary">MAK5</name>
    <name type="ORF">Kpol_1036p17</name>
</gene>
<dbReference type="EC" id="3.6.4.13"/>
<dbReference type="EMBL" id="DS480380">
    <property type="protein sequence ID" value="EDO19275.1"/>
    <property type="molecule type" value="Genomic_DNA"/>
</dbReference>
<dbReference type="RefSeq" id="XP_001647133.1">
    <property type="nucleotide sequence ID" value="XM_001647083.1"/>
</dbReference>
<dbReference type="SMR" id="A7TEG8"/>
<dbReference type="FunCoup" id="A7TEG8">
    <property type="interactions" value="1009"/>
</dbReference>
<dbReference type="STRING" id="436907.A7TEG8"/>
<dbReference type="GeneID" id="5547611"/>
<dbReference type="KEGG" id="vpo:Kpol_1036p17"/>
<dbReference type="eggNOG" id="KOG0347">
    <property type="taxonomic scope" value="Eukaryota"/>
</dbReference>
<dbReference type="HOGENOM" id="CLU_003041_13_0_1"/>
<dbReference type="InParanoid" id="A7TEG8"/>
<dbReference type="OMA" id="QMIQKAR"/>
<dbReference type="OrthoDB" id="4310724at2759"/>
<dbReference type="Proteomes" id="UP000000267">
    <property type="component" value="Unassembled WGS sequence"/>
</dbReference>
<dbReference type="GO" id="GO:0005829">
    <property type="term" value="C:cytosol"/>
    <property type="evidence" value="ECO:0007669"/>
    <property type="project" value="TreeGrafter"/>
</dbReference>
<dbReference type="GO" id="GO:0005730">
    <property type="term" value="C:nucleolus"/>
    <property type="evidence" value="ECO:0007669"/>
    <property type="project" value="UniProtKB-SubCell"/>
</dbReference>
<dbReference type="GO" id="GO:0005524">
    <property type="term" value="F:ATP binding"/>
    <property type="evidence" value="ECO:0007669"/>
    <property type="project" value="UniProtKB-KW"/>
</dbReference>
<dbReference type="GO" id="GO:0016887">
    <property type="term" value="F:ATP hydrolysis activity"/>
    <property type="evidence" value="ECO:0007669"/>
    <property type="project" value="RHEA"/>
</dbReference>
<dbReference type="GO" id="GO:0003723">
    <property type="term" value="F:RNA binding"/>
    <property type="evidence" value="ECO:0007669"/>
    <property type="project" value="UniProtKB-KW"/>
</dbReference>
<dbReference type="GO" id="GO:0003724">
    <property type="term" value="F:RNA helicase activity"/>
    <property type="evidence" value="ECO:0007669"/>
    <property type="project" value="UniProtKB-EC"/>
</dbReference>
<dbReference type="GO" id="GO:0000466">
    <property type="term" value="P:maturation of 5.8S rRNA from tricistronic rRNA transcript (SSU-rRNA, 5.8S rRNA, LSU-rRNA)"/>
    <property type="evidence" value="ECO:0007669"/>
    <property type="project" value="EnsemblFungi"/>
</dbReference>
<dbReference type="GO" id="GO:0000463">
    <property type="term" value="P:maturation of LSU-rRNA from tricistronic rRNA transcript (SSU-rRNA, 5.8S rRNA, LSU-rRNA)"/>
    <property type="evidence" value="ECO:0007669"/>
    <property type="project" value="EnsemblFungi"/>
</dbReference>
<dbReference type="CDD" id="cd17946">
    <property type="entry name" value="DEADc_DDX24"/>
    <property type="match status" value="1"/>
</dbReference>
<dbReference type="CDD" id="cd18787">
    <property type="entry name" value="SF2_C_DEAD"/>
    <property type="match status" value="1"/>
</dbReference>
<dbReference type="Gene3D" id="3.40.50.300">
    <property type="entry name" value="P-loop containing nucleotide triphosphate hydrolases"/>
    <property type="match status" value="2"/>
</dbReference>
<dbReference type="InterPro" id="IPR011545">
    <property type="entry name" value="DEAD/DEAH_box_helicase_dom"/>
</dbReference>
<dbReference type="InterPro" id="IPR050079">
    <property type="entry name" value="DEAD_box_RNA_helicase"/>
</dbReference>
<dbReference type="InterPro" id="IPR014001">
    <property type="entry name" value="Helicase_ATP-bd"/>
</dbReference>
<dbReference type="InterPro" id="IPR001650">
    <property type="entry name" value="Helicase_C-like"/>
</dbReference>
<dbReference type="InterPro" id="IPR027417">
    <property type="entry name" value="P-loop_NTPase"/>
</dbReference>
<dbReference type="InterPro" id="IPR000629">
    <property type="entry name" value="RNA-helicase_DEAD-box_CS"/>
</dbReference>
<dbReference type="PANTHER" id="PTHR47959:SF1">
    <property type="entry name" value="ATP-DEPENDENT RNA HELICASE DBPA"/>
    <property type="match status" value="1"/>
</dbReference>
<dbReference type="PANTHER" id="PTHR47959">
    <property type="entry name" value="ATP-DEPENDENT RNA HELICASE RHLE-RELATED"/>
    <property type="match status" value="1"/>
</dbReference>
<dbReference type="Pfam" id="PF00270">
    <property type="entry name" value="DEAD"/>
    <property type="match status" value="1"/>
</dbReference>
<dbReference type="Pfam" id="PF00271">
    <property type="entry name" value="Helicase_C"/>
    <property type="match status" value="1"/>
</dbReference>
<dbReference type="SMART" id="SM00487">
    <property type="entry name" value="DEXDc"/>
    <property type="match status" value="1"/>
</dbReference>
<dbReference type="SMART" id="SM00490">
    <property type="entry name" value="HELICc"/>
    <property type="match status" value="1"/>
</dbReference>
<dbReference type="SUPFAM" id="SSF52540">
    <property type="entry name" value="P-loop containing nucleoside triphosphate hydrolases"/>
    <property type="match status" value="1"/>
</dbReference>
<dbReference type="PROSITE" id="PS00039">
    <property type="entry name" value="DEAD_ATP_HELICASE"/>
    <property type="match status" value="1"/>
</dbReference>
<dbReference type="PROSITE" id="PS51192">
    <property type="entry name" value="HELICASE_ATP_BIND_1"/>
    <property type="match status" value="1"/>
</dbReference>
<dbReference type="PROSITE" id="PS51194">
    <property type="entry name" value="HELICASE_CTER"/>
    <property type="match status" value="1"/>
</dbReference>
<dbReference type="PROSITE" id="PS51195">
    <property type="entry name" value="Q_MOTIF"/>
    <property type="match status" value="1"/>
</dbReference>
<name>MAK5_VANPO</name>
<sequence length="763" mass="85615">MVNKFLAGRLKKSKGKSFKGSSSKGNSKTVKSNNNDNVVVNAADLKWKPVEIPDTLDDFEGFYGLEEIDGVGVKIVGGQVQFVAHDDTKINGNEDNLDSKDKIEIDEDAPENDLVEFKNMDDMKDGELTDNSQSESEAEAESEAESEEEEEKTGDDEGEDGAEKVDNEVLKTNVFNTDIDLEDITPSDLPEWTEKVGELSFTTLHGLTKLGFNKPTLIQEEAIPMALKGEDIMGKASTGSGKTLAYGIPIIEKLMKSKSNTAPIGLIFTPTRELAKQVTDHLRKIASLIVDKSPHAILSLTGGLSIQKQERLLKYEGSGRIVVATPGRFLELIEKDKTLVERFSQISTLVLDEADRLLQDGHFDEFENILKYLGRESKNRKHNWQTMIFSATFATDLFDKLSHASWKNMKTPSKNENEMEIVLKHLMTKIHFKSKPILIDANPEDKVSSQIKESLIECAATERDLFCYYFVSMYPGKTLIFCNAIDSVKKLTAYLNNLNISCFQIHSSMTQKNRLRNLERYQQQSEKNKILGKPTVLVGSDVAARGLDIPGIQHVIHYHLPRTADVYIHRSGRTARANNEGVSVMICSPEEAMGPLRKLRKTLANKSGKDIIMGKKKWQKTVTMLPIDDTILSQLKERSRLASELADHDLASSSLQKDDTWMKKAAEDLGVDIDSDDEIKDTFLAKNINKKRNKTLGKDQKKVLVAQLNDLLKRPLRKDMRQRYLTGGLVNLADSLVKKRGHDHIIGHEKTDALETLKNKKRK</sequence>
<feature type="chain" id="PRO_0000310211" description="ATP-dependent RNA helicase MAK5">
    <location>
        <begin position="1"/>
        <end position="763"/>
    </location>
</feature>
<feature type="domain" description="Helicase ATP-binding" evidence="2">
    <location>
        <begin position="223"/>
        <end position="411"/>
    </location>
</feature>
<feature type="domain" description="Helicase C-terminal" evidence="3">
    <location>
        <begin position="450"/>
        <end position="619"/>
    </location>
</feature>
<feature type="region of interest" description="Disordered" evidence="4">
    <location>
        <begin position="1"/>
        <end position="35"/>
    </location>
</feature>
<feature type="region of interest" description="Disordered" evidence="4">
    <location>
        <begin position="87"/>
        <end position="169"/>
    </location>
</feature>
<feature type="short sequence motif" description="Q motif">
    <location>
        <begin position="192"/>
        <end position="220"/>
    </location>
</feature>
<feature type="short sequence motif" description="DEAD box">
    <location>
        <begin position="352"/>
        <end position="355"/>
    </location>
</feature>
<feature type="compositionally biased region" description="Low complexity" evidence="4">
    <location>
        <begin position="18"/>
        <end position="35"/>
    </location>
</feature>
<feature type="compositionally biased region" description="Acidic residues" evidence="4">
    <location>
        <begin position="104"/>
        <end position="114"/>
    </location>
</feature>
<feature type="compositionally biased region" description="Basic and acidic residues" evidence="4">
    <location>
        <begin position="115"/>
        <end position="127"/>
    </location>
</feature>
<feature type="compositionally biased region" description="Acidic residues" evidence="4">
    <location>
        <begin position="136"/>
        <end position="160"/>
    </location>
</feature>
<feature type="binding site" evidence="2">
    <location>
        <begin position="236"/>
        <end position="243"/>
    </location>
    <ligand>
        <name>ATP</name>
        <dbReference type="ChEBI" id="CHEBI:30616"/>
    </ligand>
</feature>
<accession>A7TEG8</accession>
<protein>
    <recommendedName>
        <fullName>ATP-dependent RNA helicase MAK5</fullName>
        <ecNumber>3.6.4.13</ecNumber>
    </recommendedName>
</protein>
<comment type="function">
    <text evidence="1">ATP-binding RNA helicase involved in the biogenesis of 60S ribosomal subunits and is required for the normal formation of 25S and 5.8S rRNAs.</text>
</comment>
<comment type="catalytic activity">
    <reaction>
        <text>ATP + H2O = ADP + phosphate + H(+)</text>
        <dbReference type="Rhea" id="RHEA:13065"/>
        <dbReference type="ChEBI" id="CHEBI:15377"/>
        <dbReference type="ChEBI" id="CHEBI:15378"/>
        <dbReference type="ChEBI" id="CHEBI:30616"/>
        <dbReference type="ChEBI" id="CHEBI:43474"/>
        <dbReference type="ChEBI" id="CHEBI:456216"/>
        <dbReference type="EC" id="3.6.4.13"/>
    </reaction>
</comment>
<comment type="subcellular location">
    <subcellularLocation>
        <location evidence="1">Nucleus</location>
        <location evidence="1">Nucleolus</location>
    </subcellularLocation>
</comment>
<comment type="domain">
    <text>The Q motif is unique to and characteristic of the DEAD box family of RNA helicases and controls ATP binding and hydrolysis.</text>
</comment>
<comment type="similarity">
    <text evidence="5">Belongs to the DEAD box helicase family. DDX24/MAK5 subfamily.</text>
</comment>
<proteinExistence type="inferred from homology"/>